<proteinExistence type="inferred from homology"/>
<evidence type="ECO:0000250" key="1"/>
<evidence type="ECO:0000255" key="2"/>
<sequence length="856" mass="97941">MAEGFAANRQWIGPEEAEELLDFDIATQMSEEGPLNPGVNPFRVPGITEKEKQNYCNILQPKLQDLRNEIQEVKLEEGNAGKFRRARFLRYSDERVLSLVHAFIGYCIYLGNRNKLGSLRHDIDIEAPQEECYNNREKGTTDNIKYGRRCCLGTVTLYLILFTGVIVYSQTAGAQVVWRLPPLVVPVEESEIIFWDCWAPEEPACQDFLGAMIHLKAKTNISIREGPTLGNWAREIWATLFKKATRQCRRGRIWKRWNETITGPSGCANNTCYNVSVIVPDYQCYLDRVDTWLQGKINISLCLTGGKMLYNKVTKQLSYCTDPLQIPLINYTFGPNQTCMWNTSQIQDPEIPKCGWWNQMAYYNSCKWEEAKVKFHCQRTQSQPGSWFRAISSWKQRNRWEWRPDFKSKKVKISLPCNSTKNLTFAMRSSGDYGEVTGAWIEFGCHRNKSNLHTEARFRIRCRWNVGSDTSLIDTCGNTPNVSGANPVDCTMYSNKMYNCSLQNGFTMKVDDLIVHFNMTKAVEMYNIAGNWSCTSDLPSSWGYMNCNCTNSSSSYSGTKMACPSNRGILRNWYNPVAGLRQSLEQYQVVKQPDYLLVPEEVMEYKPRRKRAAIHVMLALATVLSIAGAGTGATAIGMVTQYHQVLATHQEAIEKVTGALKINNLRLVTLEHQVLVIGLKVEAMEKFLYTAFAMQELGCNQNQFFCKIPLELWTRYNMTINQTIWNHGNITLGEWYNQTKDLQQKFYEIIMDIEQNNVQGKTGIQQLQKWEDWVRWIGNIPQYLKGLLGGILGIGLGVLLLILCLPTLVDCIRNCIHKILGYTVIAMPEVEGEEIQPQMELRRNGRQCGMSEKEEE</sequence>
<reference key="1">
    <citation type="journal article" date="1989" name="Proc. Natl. Acad. Sci. U.S.A.">
        <title>Nucleotide sequence and genomic organization of feline immunodeficiency virus.</title>
        <authorList>
            <person name="Talbott R.L."/>
            <person name="Sparger E.E."/>
            <person name="Lovelace K.M."/>
            <person name="Fitch W.M."/>
            <person name="Pedersen N.C."/>
            <person name="Luciw P.A."/>
            <person name="Elder J.H."/>
        </authorList>
    </citation>
    <scope>NUCLEOTIDE SEQUENCE [GENOMIC RNA]</scope>
    <source>
        <strain>Clone 34TF10</strain>
    </source>
</reference>
<reference key="2">
    <citation type="journal article" date="1989" name="Proc. Natl. Acad. Sci. U.S.A.">
        <title>Nucleotide sequence analysis of feline immunodeficiency virus: genome organization and relationship to other lentiviruses.</title>
        <authorList>
            <person name="Olmsted R.A."/>
            <person name="Hirsch V.M."/>
            <person name="Purcell R.H."/>
            <person name="Johnson P.R."/>
        </authorList>
    </citation>
    <scope>NUCLEOTIDE SEQUENCE [GENOMIC RNA]</scope>
    <source>
        <strain>Clone FIV-14</strain>
    </source>
</reference>
<name>ENV_FIVPE</name>
<dbReference type="EMBL" id="M25381">
    <property type="protein sequence ID" value="AAB59940.1"/>
    <property type="status" value="ALT_SEQ"/>
    <property type="molecule type" value="Genomic_RNA"/>
</dbReference>
<dbReference type="PIR" id="D33543">
    <property type="entry name" value="VCLJFP"/>
</dbReference>
<dbReference type="RefSeq" id="NP_040976.1">
    <property type="nucleotide sequence ID" value="NC_001482.1"/>
</dbReference>
<dbReference type="GlyCosmos" id="P16090">
    <property type="glycosylation" value="21 sites, No reported glycans"/>
</dbReference>
<dbReference type="GeneID" id="1489987"/>
<dbReference type="KEGG" id="vg:1489987"/>
<dbReference type="Proteomes" id="UP000242267">
    <property type="component" value="Segment"/>
</dbReference>
<dbReference type="GO" id="GO:0020002">
    <property type="term" value="C:host cell plasma membrane"/>
    <property type="evidence" value="ECO:0007669"/>
    <property type="project" value="UniProtKB-SubCell"/>
</dbReference>
<dbReference type="GO" id="GO:0016020">
    <property type="term" value="C:membrane"/>
    <property type="evidence" value="ECO:0007669"/>
    <property type="project" value="UniProtKB-KW"/>
</dbReference>
<dbReference type="GO" id="GO:0019031">
    <property type="term" value="C:viral envelope"/>
    <property type="evidence" value="ECO:0007669"/>
    <property type="project" value="UniProtKB-KW"/>
</dbReference>
<dbReference type="GO" id="GO:0055036">
    <property type="term" value="C:virion membrane"/>
    <property type="evidence" value="ECO:0007669"/>
    <property type="project" value="UniProtKB-SubCell"/>
</dbReference>
<dbReference type="GO" id="GO:0005198">
    <property type="term" value="F:structural molecule activity"/>
    <property type="evidence" value="ECO:0007669"/>
    <property type="project" value="InterPro"/>
</dbReference>
<dbReference type="GO" id="GO:0046718">
    <property type="term" value="P:symbiont entry into host cell"/>
    <property type="evidence" value="ECO:0007669"/>
    <property type="project" value="UniProtKB-KW"/>
</dbReference>
<dbReference type="GO" id="GO:0019062">
    <property type="term" value="P:virion attachment to host cell"/>
    <property type="evidence" value="ECO:0007669"/>
    <property type="project" value="UniProtKB-KW"/>
</dbReference>
<dbReference type="CDD" id="cd09909">
    <property type="entry name" value="HIV-1-like_HR1-HR2"/>
    <property type="match status" value="1"/>
</dbReference>
<dbReference type="InterPro" id="IPR018582">
    <property type="entry name" value="Envelope_glycop_lentivirus"/>
</dbReference>
<dbReference type="InterPro" id="IPR000328">
    <property type="entry name" value="GP41-like"/>
</dbReference>
<dbReference type="Pfam" id="PF09590">
    <property type="entry name" value="Env-gp36"/>
    <property type="match status" value="1"/>
</dbReference>
<gene>
    <name type="primary">env</name>
</gene>
<comment type="function">
    <text evidence="1">The surface protein (SU) attaches the virus to the host cell by binding to its receptor. This interaction triggers the refolding of the transmembrane protein (TM) and is thought to activate its fusogenic potential by unmasking its fusion peptide. Fusion occurs at the host cell plasma membrane (By similarity).</text>
</comment>
<comment type="function">
    <text evidence="1">The transmembrane protein (TM) acts as a class I viral fusion protein. Under the current model, the protein has at least 3 conformational states: pre-fusion native state, pre-hairpin intermediate state, and post-fusion hairpin state. During viral and target cell membrane fusion, the coiled coil regions (heptad repeats) assume a trimer-of-hairpins structure, positioning the fusion peptide in close proximity to the C-terminal region of the ectodomain. The formation of this structure appears to drive apposition and subsequent fusion of viral and target cell membranes. Membranes fusion leads to delivery of the nucleocapsid into the cytoplasm (By similarity).</text>
</comment>
<comment type="subunit">
    <text evidence="1">The mature envelope protein (Env) consists of a trimer of SU-TM heterodimers attached by noncovalent interactions or by a labile interchain disulfide bond.</text>
</comment>
<comment type="subcellular location">
    <molecule>Transmembrane protein</molecule>
    <subcellularLocation>
        <location evidence="1">Virion membrane</location>
        <topology evidence="1">Single-pass type I membrane protein</topology>
    </subcellularLocation>
    <subcellularLocation>
        <location evidence="1">Host cell membrane</location>
        <topology evidence="1">Single-pass type I membrane protein</topology>
    </subcellularLocation>
    <text evidence="1">It is probably concentrated at the site of budding and incorporated into the virions possibly by contacts between the cytoplasmic tail of Env and the N-terminus of Gag.</text>
</comment>
<comment type="subcellular location">
    <molecule>Surface protein</molecule>
    <subcellularLocation>
        <location evidence="1">Virion membrane</location>
        <topology evidence="1">Peripheral membrane protein</topology>
    </subcellularLocation>
    <subcellularLocation>
        <location evidence="1">Host cell membrane</location>
        <topology evidence="1">Peripheral membrane protein</topology>
    </subcellularLocation>
    <text evidence="1">The surface protein is not anchored to the viral envelope, but associates with the extravirion surface through its binding to TM. It is probably concentrated at the site of budding and incorporated into the virions possibly by contacts between the cytoplasmic tail of Env and the N-terminus of Gag (By similarity).</text>
</comment>
<comment type="PTM">
    <text evidence="1">Specific enzymatic cleavages in vivo yield mature proteins. Envelope glycoproteins are synthesized as an inactive precursor that is N-glycosylated and processed likely by host cell furin or by a furin-like protease in the Golgi to yield the mature SU and TM proteins. The cleavage site between SU and TM requires the minimal sequence [KR]-X-[KR]-R (By similarity).</text>
</comment>
<keyword id="KW-0165">Cleavage on pair of basic residues</keyword>
<keyword id="KW-0175">Coiled coil</keyword>
<keyword id="KW-1015">Disulfide bond</keyword>
<keyword id="KW-0325">Glycoprotein</keyword>
<keyword id="KW-1032">Host cell membrane</keyword>
<keyword id="KW-1043">Host membrane</keyword>
<keyword id="KW-0945">Host-virus interaction</keyword>
<keyword id="KW-0472">Membrane</keyword>
<keyword id="KW-1185">Reference proteome</keyword>
<keyword id="KW-0812">Transmembrane</keyword>
<keyword id="KW-1133">Transmembrane helix</keyword>
<keyword id="KW-1161">Viral attachment to host cell</keyword>
<keyword id="KW-0261">Viral envelope protein</keyword>
<keyword id="KW-0946">Virion</keyword>
<keyword id="KW-1160">Virus entry into host cell</keyword>
<feature type="chain" id="PRO_0000239532" description="Envelope glycoprotein gp150">
    <location>
        <begin position="1"/>
        <end position="856"/>
    </location>
</feature>
<feature type="chain" id="PRO_0000038717" description="Surface protein" evidence="1">
    <location>
        <begin position="1"/>
        <end position="611"/>
    </location>
</feature>
<feature type="chain" id="PRO_0000038718" description="Transmembrane protein" evidence="1">
    <location>
        <begin position="612"/>
        <end position="856"/>
    </location>
</feature>
<feature type="topological domain" description="Extracellular" evidence="2">
    <location>
        <begin position="1"/>
        <end position="785"/>
    </location>
</feature>
<feature type="transmembrane region" description="Helical" evidence="2">
    <location>
        <begin position="786"/>
        <end position="806"/>
    </location>
</feature>
<feature type="topological domain" description="Cytoplasmic" evidence="2">
    <location>
        <begin position="807"/>
        <end position="856"/>
    </location>
</feature>
<feature type="region of interest" description="Fusion peptide" evidence="2">
    <location>
        <begin position="616"/>
        <end position="636"/>
    </location>
</feature>
<feature type="region of interest" description="Immunosuppression" evidence="1">
    <location>
        <begin position="662"/>
        <end position="680"/>
    </location>
</feature>
<feature type="coiled-coil region" evidence="2">
    <location>
        <begin position="643"/>
        <end position="693"/>
    </location>
</feature>
<feature type="coiled-coil region" evidence="2">
    <location>
        <begin position="736"/>
        <end position="772"/>
    </location>
</feature>
<feature type="site" description="Cleavage; by host" evidence="1">
    <location>
        <begin position="611"/>
        <end position="612"/>
    </location>
</feature>
<feature type="glycosylation site" description="N-linked (GlcNAc...) asparagine; by host" evidence="2">
    <location>
        <position position="220"/>
    </location>
</feature>
<feature type="glycosylation site" description="N-linked (GlcNAc...) asparagine; by host" evidence="2">
    <location>
        <position position="258"/>
    </location>
</feature>
<feature type="glycosylation site" description="N-linked (GlcNAc...) asparagine; by host" evidence="2">
    <location>
        <position position="269"/>
    </location>
</feature>
<feature type="glycosylation site" description="N-linked (GlcNAc...) asparagine; by host" evidence="2">
    <location>
        <position position="274"/>
    </location>
</feature>
<feature type="glycosylation site" description="N-linked (GlcNAc...) asparagine; by host" evidence="2">
    <location>
        <position position="298"/>
    </location>
</feature>
<feature type="glycosylation site" description="N-linked (GlcNAc...) asparagine; by host" evidence="2">
    <location>
        <position position="330"/>
    </location>
</feature>
<feature type="glycosylation site" description="N-linked (GlcNAc...) asparagine; by host" evidence="2">
    <location>
        <position position="336"/>
    </location>
</feature>
<feature type="glycosylation site" description="N-linked (GlcNAc...) asparagine; by host" evidence="2">
    <location>
        <position position="342"/>
    </location>
</feature>
<feature type="glycosylation site" description="N-linked (GlcNAc...) asparagine; by host" evidence="2">
    <location>
        <position position="418"/>
    </location>
</feature>
<feature type="glycosylation site" description="N-linked (GlcNAc...) asparagine; by host" evidence="2">
    <location>
        <position position="422"/>
    </location>
</feature>
<feature type="glycosylation site" description="N-linked (GlcNAc...) asparagine; by host" evidence="2">
    <location>
        <position position="448"/>
    </location>
</feature>
<feature type="glycosylation site" description="N-linked (GlcNAc...) asparagine; by host" evidence="2">
    <location>
        <position position="481"/>
    </location>
</feature>
<feature type="glycosylation site" description="N-linked (GlcNAc...) asparagine; by host" evidence="2">
    <location>
        <position position="499"/>
    </location>
</feature>
<feature type="glycosylation site" description="N-linked (GlcNAc...) asparagine; by host" evidence="2">
    <location>
        <position position="518"/>
    </location>
</feature>
<feature type="glycosylation site" description="N-linked (GlcNAc...) asparagine; by host" evidence="2">
    <location>
        <position position="531"/>
    </location>
</feature>
<feature type="glycosylation site" description="N-linked (GlcNAc...) asparagine; by host" evidence="2">
    <location>
        <position position="548"/>
    </location>
</feature>
<feature type="glycosylation site" description="N-linked (GlcNAc...) asparagine; by host" evidence="2">
    <location>
        <position position="551"/>
    </location>
</feature>
<feature type="glycosylation site" description="N-linked (GlcNAc...) asparagine; by host" evidence="2">
    <location>
        <position position="717"/>
    </location>
</feature>
<feature type="glycosylation site" description="N-linked (GlcNAc...) asparagine; by host" evidence="2">
    <location>
        <position position="721"/>
    </location>
</feature>
<feature type="glycosylation site" description="N-linked (GlcNAc...) asparagine; by host" evidence="2">
    <location>
        <position position="729"/>
    </location>
</feature>
<feature type="glycosylation site" description="N-linked (GlcNAc...) asparagine; by host" evidence="2">
    <location>
        <position position="737"/>
    </location>
</feature>
<accession>P16090</accession>
<protein>
    <recommendedName>
        <fullName>Envelope glycoprotein gp150</fullName>
    </recommendedName>
    <alternativeName>
        <fullName>Env polyprotein</fullName>
    </alternativeName>
    <component>
        <recommendedName>
            <fullName>Surface protein</fullName>
            <shortName>SU</shortName>
        </recommendedName>
        <alternativeName>
            <fullName>Glycoprotein 100</fullName>
            <shortName>gp100</shortName>
        </alternativeName>
    </component>
    <component>
        <recommendedName>
            <fullName>Transmembrane protein</fullName>
            <shortName>TM</shortName>
        </recommendedName>
        <alternativeName>
            <fullName>Glycoprotein 36</fullName>
            <shortName>gp36</shortName>
        </alternativeName>
    </component>
</protein>
<organismHost>
    <name type="scientific">Felidae</name>
    <name type="common">cat family</name>
    <dbReference type="NCBI Taxonomy" id="9681"/>
</organismHost>
<organism>
    <name type="scientific">Feline immunodeficiency virus (isolate Petaluma)</name>
    <name type="common">FIV</name>
    <dbReference type="NCBI Taxonomy" id="11674"/>
    <lineage>
        <taxon>Viruses</taxon>
        <taxon>Riboviria</taxon>
        <taxon>Pararnavirae</taxon>
        <taxon>Artverviricota</taxon>
        <taxon>Revtraviricetes</taxon>
        <taxon>Ortervirales</taxon>
        <taxon>Retroviridae</taxon>
        <taxon>Orthoretrovirinae</taxon>
        <taxon>Lentivirus</taxon>
        <taxon>Feline immunodeficiency virus</taxon>
    </lineage>
</organism>